<gene>
    <name type="ORF">ORF22</name>
</gene>
<dbReference type="EMBL" id="AF191796">
    <property type="protein sequence ID" value="AAQ13737.1"/>
    <property type="molecule type" value="Genomic_DNA"/>
</dbReference>
<dbReference type="RefSeq" id="YP_529534.1">
    <property type="nucleotide sequence ID" value="NC_007914.1"/>
</dbReference>
<dbReference type="KEGG" id="vg:5142385"/>
<dbReference type="Proteomes" id="UP000007024">
    <property type="component" value="Segment"/>
</dbReference>
<protein>
    <recommendedName>
        <fullName>Uncharacterized protein ORF22</fullName>
    </recommendedName>
</protein>
<keyword id="KW-1185">Reference proteome</keyword>
<organismHost>
    <name type="scientific">Haloarcula hispanica</name>
    <dbReference type="NCBI Taxonomy" id="51589"/>
</organismHost>
<accession>Q25BH3</accession>
<sequence length="32" mass="3557">MAVTIAVDFCACVCNIDLWLPKAMVFKLALAW</sequence>
<name>Y022_HIS1I</name>
<organism>
    <name type="scientific">His1 virus (isolate Australia/Victoria)</name>
    <name type="common">His1V</name>
    <name type="synonym">Haloarcula hispanica virus 1</name>
    <dbReference type="NCBI Taxonomy" id="654912"/>
    <lineage>
        <taxon>Viruses</taxon>
        <taxon>Viruses incertae sedis</taxon>
        <taxon>Halspiviridae</taxon>
        <taxon>Salterprovirus</taxon>
        <taxon>Salterprovirus His1</taxon>
    </lineage>
</organism>
<reference key="1">
    <citation type="journal article" date="2006" name="Virology">
        <title>His1 and His2 are distantly related, spindle-shaped haloviruses belonging to the novel virus group, Salterprovirus.</title>
        <authorList>
            <person name="Bath C."/>
            <person name="Cukalac T."/>
            <person name="Porter K."/>
            <person name="Dyall-Smith M.L."/>
        </authorList>
    </citation>
    <scope>NUCLEOTIDE SEQUENCE [GENOMIC DNA]</scope>
</reference>
<proteinExistence type="predicted"/>
<feature type="chain" id="PRO_0000384890" description="Uncharacterized protein ORF22">
    <location>
        <begin position="1"/>
        <end position="32"/>
    </location>
</feature>